<protein>
    <recommendedName>
        <fullName evidence="7">Actin-2</fullName>
        <ecNumber evidence="4 5">3.6.4.-</ecNumber>
    </recommendedName>
    <alternativeName>
        <fullName evidence="6">Actin II</fullName>
        <shortName evidence="8">PbAct II</shortName>
    </alternativeName>
</protein>
<evidence type="ECO:0000250" key="1">
    <source>
        <dbReference type="UniProtKB" id="Q8I4X0"/>
    </source>
</evidence>
<evidence type="ECO:0000269" key="2">
    <source>
    </source>
</evidence>
<evidence type="ECO:0000269" key="3">
    <source>
    </source>
</evidence>
<evidence type="ECO:0000269" key="4">
    <source>
    </source>
</evidence>
<evidence type="ECO:0000269" key="5">
    <source>
    </source>
</evidence>
<evidence type="ECO:0000303" key="6">
    <source>
    </source>
</evidence>
<evidence type="ECO:0000303" key="7">
    <source>
    </source>
</evidence>
<evidence type="ECO:0000303" key="8">
    <source>
    </source>
</evidence>
<evidence type="ECO:0000305" key="9"/>
<evidence type="ECO:0000305" key="10">
    <source>
    </source>
</evidence>
<evidence type="ECO:0000312" key="11">
    <source>
        <dbReference type="Proteomes" id="UP000074855"/>
    </source>
</evidence>
<evidence type="ECO:0007744" key="12">
    <source>
        <dbReference type="PDB" id="4CBX"/>
    </source>
</evidence>
<evidence type="ECO:0007744" key="13">
    <source>
        <dbReference type="PDB" id="6I4M"/>
    </source>
</evidence>
<evidence type="ECO:0007829" key="14">
    <source>
        <dbReference type="PDB" id="6I4M"/>
    </source>
</evidence>
<accession>Q4YU79</accession>
<accession>A0A509ALJ2</accession>
<proteinExistence type="evidence at protein level"/>
<dbReference type="EC" id="3.6.4.-" evidence="4 5"/>
<dbReference type="EMBL" id="LK023125">
    <property type="protein sequence ID" value="VUC56298.1"/>
    <property type="molecule type" value="Genomic_DNA"/>
</dbReference>
<dbReference type="RefSeq" id="XP_680164.1">
    <property type="nucleotide sequence ID" value="XM_675072.1"/>
</dbReference>
<dbReference type="PDB" id="4CBX">
    <property type="method" value="X-ray"/>
    <property type="resolution" value="2.20 A"/>
    <property type="chains" value="A=1-376"/>
</dbReference>
<dbReference type="PDB" id="6I4M">
    <property type="method" value="X-ray"/>
    <property type="resolution" value="1.87 A"/>
    <property type="chains" value="A=1-376"/>
</dbReference>
<dbReference type="PDBsum" id="4CBX"/>
<dbReference type="PDBsum" id="6I4M"/>
<dbReference type="SMR" id="Q4YU79"/>
<dbReference type="STRING" id="5823.A0A509ALJ2"/>
<dbReference type="VEuPathDB" id="PlasmoDB:PBANKA_1030100"/>
<dbReference type="eggNOG" id="KOG0676">
    <property type="taxonomic scope" value="Eukaryota"/>
</dbReference>
<dbReference type="HOGENOM" id="CLU_027965_0_2_1"/>
<dbReference type="OMA" id="PNIMVGM"/>
<dbReference type="EvolutionaryTrace" id="Q4YU79"/>
<dbReference type="Proteomes" id="UP000074855">
    <property type="component" value="Chromosome 10"/>
</dbReference>
<dbReference type="GO" id="GO:0005737">
    <property type="term" value="C:cytoplasm"/>
    <property type="evidence" value="ECO:0000314"/>
    <property type="project" value="UniProtKB"/>
</dbReference>
<dbReference type="GO" id="GO:0005856">
    <property type="term" value="C:cytoskeleton"/>
    <property type="evidence" value="ECO:0007669"/>
    <property type="project" value="UniProtKB-SubCell"/>
</dbReference>
<dbReference type="GO" id="GO:0005524">
    <property type="term" value="F:ATP binding"/>
    <property type="evidence" value="ECO:0000314"/>
    <property type="project" value="UniProtKB"/>
</dbReference>
<dbReference type="GO" id="GO:0016887">
    <property type="term" value="F:ATP hydrolysis activity"/>
    <property type="evidence" value="ECO:0000314"/>
    <property type="project" value="UniProtKB"/>
</dbReference>
<dbReference type="GO" id="GO:0044782">
    <property type="term" value="P:cilium organization"/>
    <property type="evidence" value="ECO:0000315"/>
    <property type="project" value="UniProtKB"/>
</dbReference>
<dbReference type="GO" id="GO:0035891">
    <property type="term" value="P:exit from host cell"/>
    <property type="evidence" value="ECO:0000315"/>
    <property type="project" value="UniProtKB"/>
</dbReference>
<dbReference type="GO" id="GO:0048232">
    <property type="term" value="P:male gamete generation"/>
    <property type="evidence" value="ECO:0000315"/>
    <property type="project" value="UniProtKB"/>
</dbReference>
<dbReference type="GO" id="GO:0044129">
    <property type="term" value="P:positive regulation of development of symbiont in host"/>
    <property type="evidence" value="ECO:0000315"/>
    <property type="project" value="UniProtKB"/>
</dbReference>
<dbReference type="CDD" id="cd10224">
    <property type="entry name" value="ASKHA_NBD_actin"/>
    <property type="match status" value="1"/>
</dbReference>
<dbReference type="FunFam" id="3.90.640.10:FF:000047">
    <property type="entry name" value="Actin, alpha skeletal muscle"/>
    <property type="match status" value="1"/>
</dbReference>
<dbReference type="FunFam" id="3.30.420.40:FF:000018">
    <property type="entry name" value="Actin-like protein (Centractin)"/>
    <property type="match status" value="1"/>
</dbReference>
<dbReference type="FunFam" id="3.30.420.40:FF:000501">
    <property type="entry name" value="Predicted protein"/>
    <property type="match status" value="2"/>
</dbReference>
<dbReference type="FunFam" id="3.30.420.40:FF:000058">
    <property type="entry name" value="Putative actin-related protein 5"/>
    <property type="match status" value="1"/>
</dbReference>
<dbReference type="Gene3D" id="3.30.420.40">
    <property type="match status" value="2"/>
</dbReference>
<dbReference type="Gene3D" id="3.90.640.10">
    <property type="entry name" value="Actin, Chain A, domain 4"/>
    <property type="match status" value="1"/>
</dbReference>
<dbReference type="InterPro" id="IPR004000">
    <property type="entry name" value="Actin"/>
</dbReference>
<dbReference type="InterPro" id="IPR020902">
    <property type="entry name" value="Actin/actin-like_CS"/>
</dbReference>
<dbReference type="InterPro" id="IPR004001">
    <property type="entry name" value="Actin_CS"/>
</dbReference>
<dbReference type="InterPro" id="IPR043129">
    <property type="entry name" value="ATPase_NBD"/>
</dbReference>
<dbReference type="PANTHER" id="PTHR11937">
    <property type="entry name" value="ACTIN"/>
    <property type="match status" value="1"/>
</dbReference>
<dbReference type="Pfam" id="PF00022">
    <property type="entry name" value="Actin"/>
    <property type="match status" value="1"/>
</dbReference>
<dbReference type="PRINTS" id="PR00190">
    <property type="entry name" value="ACTIN"/>
</dbReference>
<dbReference type="SMART" id="SM00268">
    <property type="entry name" value="ACTIN"/>
    <property type="match status" value="1"/>
</dbReference>
<dbReference type="SUPFAM" id="SSF53067">
    <property type="entry name" value="Actin-like ATPase domain"/>
    <property type="match status" value="2"/>
</dbReference>
<dbReference type="PROSITE" id="PS00406">
    <property type="entry name" value="ACTINS_1"/>
    <property type="match status" value="1"/>
</dbReference>
<dbReference type="PROSITE" id="PS00432">
    <property type="entry name" value="ACTINS_2"/>
    <property type="match status" value="1"/>
</dbReference>
<dbReference type="PROSITE" id="PS01132">
    <property type="entry name" value="ACTINS_ACT_LIKE"/>
    <property type="match status" value="1"/>
</dbReference>
<keyword id="KW-0002">3D-structure</keyword>
<keyword id="KW-0067">ATP-binding</keyword>
<keyword id="KW-0963">Cytoplasm</keyword>
<keyword id="KW-0206">Cytoskeleton</keyword>
<keyword id="KW-0378">Hydrolase</keyword>
<keyword id="KW-0488">Methylation</keyword>
<keyword id="KW-0547">Nucleotide-binding</keyword>
<keyword id="KW-1185">Reference proteome</keyword>
<organism>
    <name type="scientific">Plasmodium berghei (strain Anka)</name>
    <dbReference type="NCBI Taxonomy" id="5823"/>
    <lineage>
        <taxon>Eukaryota</taxon>
        <taxon>Sar</taxon>
        <taxon>Alveolata</taxon>
        <taxon>Apicomplexa</taxon>
        <taxon>Aconoidasida</taxon>
        <taxon>Haemosporida</taxon>
        <taxon>Plasmodiidae</taxon>
        <taxon>Plasmodium</taxon>
        <taxon>Plasmodium (Vinckeia)</taxon>
    </lineage>
</organism>
<gene>
    <name evidence="9" type="primary">ACT2</name>
    <name evidence="6" type="synonym">ACTII</name>
    <name type="ORF">PB001050.02.0</name>
    <name type="ORF">PBANKA_1030100</name>
</gene>
<name>ACT2_PLABA</name>
<sequence>MPEESIALVVDNGSGMVKSGLAGDDAPKCVFPSIIGIPKMPNIMVGMEQKECYVGDEAQNKRGILTLKYPIEHGIVTNWDDMEKIWRHTFFNELRVSPEEHPVLLTEAPLNPKTNREKMTQIMFESFDVPAMYVSIQAILSLYASGRTTGIVLDSGDGVTHTVPIYEGYVLPHAINRTDMAGRDLTYYMMKLFTERGYTFTTTAEREIVRDIKEKLCYIALDYDEELKKSEERTEEVEEMYELPDGNLITVGSERFRCPEALFNPSLIGRECPGLHITAYQSIMKCDIDIRKELYNNIVLSGGTTMYNYIGERLTNEMTSLAPPSMKIKVIAPPERKYSVWIGGSILSSLSTFQKMWITKEEYDESGPSIVHRKCF</sequence>
<comment type="function">
    <text evidence="2 3 4 5 10">Actin is a highly conserved protein that polymerizes to produce filaments that form cross-linked networks in the cytoplasm (PubMed:24743229, PubMed:31199804). Polymerizes into longer and more stable actin filaments compared to ACT1/actin-1 (PubMed:24743229). Has ATPase activity (PubMed:24743229, PubMed:31199804). ATP hydrolysis leads to the formation of a stable intermediate ADP-inorganic phosphate (Pi) actin, which is followed by the release of Pi (Probable). ATP hydrolysis affects filament stability; ADP-bound actin depolymerizes much faster than ATP- or ADP-Pi-bound actin (Probable). Plays an essential role in male gametocyte development in the mosquito midgut, functioning in several processes including male gametocyte egress from host erythrocytes, formation of a beating flagellum and relocalization of ACT1/actin-1 to the cytoplasm (PubMed:21790945, PubMed:24743229). On the basal side of the mosquito midgut epithelium, required for the development of ookinetes into sporogonic oocysts (PubMed:24471657).</text>
</comment>
<comment type="catalytic activity">
    <reaction evidence="4 5">
        <text>ATP + H2O = ADP + phosphate + H(+)</text>
        <dbReference type="Rhea" id="RHEA:13065"/>
        <dbReference type="ChEBI" id="CHEBI:15377"/>
        <dbReference type="ChEBI" id="CHEBI:15378"/>
        <dbReference type="ChEBI" id="CHEBI:30616"/>
        <dbReference type="ChEBI" id="CHEBI:43474"/>
        <dbReference type="ChEBI" id="CHEBI:456216"/>
    </reaction>
</comment>
<comment type="activity regulation">
    <text evidence="4">ATP hydrolysis occurs in the polymeric state (PubMed:24743229). Unlike for mammalian actin, ATP hydrolysis occurs also in the monomeric form and the release of inorganic phosphate (Pi) is more efficient (PubMed:24743229).</text>
</comment>
<comment type="subunit">
    <text evidence="4 5">Monomer (G-actin) (PubMed:24743229, PubMed:31199804). Oligomer (F-actin) (PubMed:24743229, PubMed:31199804). Polymerization of globular actin (G-actin) leads to a structural filament (F-actin) in the form of a two-stranded helix (PubMed:24743229). Unlike for mammalian monomeric actin, monomeric actin is able to induce oligomerization with ATP or ADP (PubMed:24743229). Mg(2+), which is used to coordinate ATP, is required for polymerization (PubMed:24743229).</text>
</comment>
<comment type="subcellular location">
    <subcellularLocation>
        <location evidence="2 3">Cytoplasm</location>
    </subcellularLocation>
    <subcellularLocation>
        <location evidence="1">Cytoplasm</location>
        <location evidence="1">Cytoskeleton</location>
    </subcellularLocation>
    <text evidence="2">Prior to gametocyte activation in the mosquito midgut, localizes to the cytoplasm (PubMed:21790945). Following gametocyte activation, localizes to a ring around the nucleus (PubMed:21790945).</text>
</comment>
<comment type="developmental stage">
    <text evidence="2 3">Expressed in ookinetes from the maternal gene (at protein level) (PubMed:24471657). Expressed in both female and male gametocytes; expression is higher in male gametocytes (PubMed:21790945). Not expressed during the asexual blood stage (PubMed:21790945). Not expressed in oocysts (PubMed:24471657).</text>
</comment>
<comment type="disruption phenotype">
    <text evidence="2">Normal asexual blood stage development (PubMed:21790945). Production of gametocytes is normal; however, following activation, gametocytes fail to egress from the host cell and to form beating flagella, while axoneme assembly and DNA replication proceed normally (PubMed:21790945). In addition, redistribution of nuclear ACT1 into the cytoplasm fails (PubMed:21790945). Severe reduction in the number of ookinetes produced; however, there is no oocyst formation (PubMed:21790945). No defect in female gametocyte activation (PubMed:21790945).</text>
</comment>
<comment type="miscellaneous">
    <text evidence="4">ACT1 and ACT2 differ in their polymerization, filament stability and helical structure (PubMed:24743229). Unlike mammalian actin, Apicomplexa actins do not form long and stable filaments (PubMed:24743229).</text>
</comment>
<comment type="similarity">
    <text evidence="9">Belongs to the actin family.</text>
</comment>
<reference evidence="11" key="1">
    <citation type="journal article" date="2014" name="BMC Biol.">
        <title>A comprehensive evaluation of rodent malaria parasite genomes and gene expression.</title>
        <authorList>
            <person name="Otto T.D."/>
            <person name="Bohme U."/>
            <person name="Jackson A.P."/>
            <person name="Hunt M."/>
            <person name="Franke-Fayard B."/>
            <person name="Hoeijmakers W.A."/>
            <person name="Religa A.A."/>
            <person name="Robertson L."/>
            <person name="Sanders M."/>
            <person name="Ogun S.A."/>
            <person name="Cunningham D."/>
            <person name="Erhart A."/>
            <person name="Billker O."/>
            <person name="Khan S.M."/>
            <person name="Stunnenberg H.G."/>
            <person name="Langhorne J."/>
            <person name="Holder A.A."/>
            <person name="Waters A.P."/>
            <person name="Newbold C.I."/>
            <person name="Pain A."/>
            <person name="Berriman M."/>
            <person name="Janse C.J."/>
        </authorList>
    </citation>
    <scope>NUCLEOTIDE SEQUENCE [LARGE SCALE GENOMIC DNA]</scope>
    <source>
        <strain evidence="11">ANKA</strain>
    </source>
</reference>
<reference key="2">
    <citation type="journal article" date="2011" name="Cell. Microbiol.">
        <title>Critical role for a stage-specific actin in male exflagellation of the malaria parasite.</title>
        <authorList>
            <person name="Deligianni E."/>
            <person name="Morgan R.N."/>
            <person name="Bertuccini L."/>
            <person name="Kooij T.W."/>
            <person name="Laforge A."/>
            <person name="Nahar C."/>
            <person name="Poulakakis N."/>
            <person name="Schueler H."/>
            <person name="Louis C."/>
            <person name="Matuschewski K."/>
            <person name="Siden-Kiamos I."/>
        </authorList>
    </citation>
    <scope>FUNCTION</scope>
    <scope>SUBCELLULAR LOCATION</scope>
    <scope>DEVELOPMENTAL STAGE</scope>
    <scope>DISRUPTION PHENOTYPE</scope>
</reference>
<reference key="3">
    <citation type="journal article" date="2014" name="Cell. Microbiol.">
        <title>Genetic crosses and complementation reveal essential functions for the Plasmodium stage-specific actin2 in sporogonic development.</title>
        <authorList>
            <person name="Andreadaki M."/>
            <person name="Morgan R.N."/>
            <person name="Deligianni E."/>
            <person name="Kooij T.W."/>
            <person name="Santos J.M."/>
            <person name="Spanos L."/>
            <person name="Matuschewski K."/>
            <person name="Louis C."/>
            <person name="Mair G.R."/>
            <person name="Siden-Kiamos I."/>
        </authorList>
    </citation>
    <scope>FUNCTION</scope>
    <scope>SUBCELLULAR LOCATION</scope>
    <scope>DEVELOPMENTAL STAGE</scope>
</reference>
<reference evidence="12" key="4">
    <citation type="journal article" date="2014" name="PLoS Pathog.">
        <title>Structural differences explain diverse functions of Plasmodium actins.</title>
        <authorList>
            <person name="Vahokoski J."/>
            <person name="Bhargav S.P."/>
            <person name="Desfosses A."/>
            <person name="Andreadaki M."/>
            <person name="Kumpula E.P."/>
            <person name="Martinez S.M."/>
            <person name="Ignatev A."/>
            <person name="Lepper S."/>
            <person name="Frischknecht F."/>
            <person name="Siden-Kiamos I."/>
            <person name="Sachse C."/>
            <person name="Kursula I."/>
        </authorList>
    </citation>
    <scope>X-RAY CRYSTALLOGRAPHY (2.20 ANGSTROMS) IN COMPLEX WITH ATP AND MOUSE GSN</scope>
    <scope>FUNCTION</scope>
    <scope>CATALYTIC ACTIVITY</scope>
    <scope>ACTIVITY REGULATION</scope>
    <scope>SUBUNIT</scope>
</reference>
<reference evidence="13" key="5">
    <citation type="journal article" date="2019" name="PLoS Biol.">
        <title>Atomic view into Plasmodium actin polymerization, ATP hydrolysis, and fragmentation.</title>
        <authorList>
            <person name="Kumpula E.P."/>
            <person name="Lopez A.J."/>
            <person name="Tajedin L."/>
            <person name="Han H."/>
            <person name="Kursula I."/>
        </authorList>
    </citation>
    <scope>X-RAY CRYSTALLOGRAPHY (1.87 ANGSTROMS) IN COMPLEX WITH MG-ADP AND MOUSE GSN</scope>
    <scope>FUNCTION</scope>
    <scope>CATALYTIC ACTIVITY</scope>
    <scope>SUBUNIT</scope>
    <scope>METHYLATION AT HIS-73</scope>
</reference>
<feature type="chain" id="PRO_0000233391" description="Actin-2">
    <location>
        <begin position="1"/>
        <end position="376"/>
    </location>
</feature>
<feature type="binding site" evidence="4 5 12 13">
    <location>
        <position position="14"/>
    </location>
    <ligand>
        <name>ATP</name>
        <dbReference type="ChEBI" id="CHEBI:30616"/>
    </ligand>
</feature>
<feature type="binding site" evidence="4 5 12 13">
    <location>
        <position position="15"/>
    </location>
    <ligand>
        <name>ATP</name>
        <dbReference type="ChEBI" id="CHEBI:30616"/>
    </ligand>
</feature>
<feature type="binding site" evidence="4 5 12 13">
    <location>
        <position position="16"/>
    </location>
    <ligand>
        <name>ATP</name>
        <dbReference type="ChEBI" id="CHEBI:30616"/>
    </ligand>
</feature>
<feature type="binding site" evidence="4 5 12 13">
    <location>
        <position position="18"/>
    </location>
    <ligand>
        <name>ATP</name>
        <dbReference type="ChEBI" id="CHEBI:30616"/>
    </ligand>
</feature>
<feature type="binding site" evidence="4 5 12 13">
    <location>
        <position position="157"/>
    </location>
    <ligand>
        <name>ATP</name>
        <dbReference type="ChEBI" id="CHEBI:30616"/>
    </ligand>
</feature>
<feature type="binding site" evidence="4 12">
    <location>
        <position position="158"/>
    </location>
    <ligand>
        <name>ATP</name>
        <dbReference type="ChEBI" id="CHEBI:30616"/>
    </ligand>
</feature>
<feature type="binding site" evidence="4 12">
    <location>
        <position position="159"/>
    </location>
    <ligand>
        <name>ATP</name>
        <dbReference type="ChEBI" id="CHEBI:30616"/>
    </ligand>
</feature>
<feature type="binding site" evidence="4 5 12 13">
    <location>
        <position position="213"/>
    </location>
    <ligand>
        <name>ATP</name>
        <dbReference type="ChEBI" id="CHEBI:30616"/>
    </ligand>
</feature>
<feature type="binding site" evidence="4 5 12 13">
    <location>
        <position position="303"/>
    </location>
    <ligand>
        <name>ATP</name>
        <dbReference type="ChEBI" id="CHEBI:30616"/>
    </ligand>
</feature>
<feature type="modified residue" description="Tele-methylhistidine" evidence="5">
    <location>
        <position position="73"/>
    </location>
</feature>
<feature type="strand" evidence="14">
    <location>
        <begin position="8"/>
        <end position="12"/>
    </location>
</feature>
<feature type="strand" evidence="14">
    <location>
        <begin position="14"/>
        <end position="21"/>
    </location>
</feature>
<feature type="strand" evidence="14">
    <location>
        <begin position="28"/>
        <end position="32"/>
    </location>
</feature>
<feature type="strand" evidence="14">
    <location>
        <begin position="35"/>
        <end position="37"/>
    </location>
</feature>
<feature type="helix" evidence="14">
    <location>
        <begin position="56"/>
        <end position="60"/>
    </location>
</feature>
<feature type="strand" evidence="14">
    <location>
        <begin position="65"/>
        <end position="68"/>
    </location>
</feature>
<feature type="turn" evidence="14">
    <location>
        <begin position="70"/>
        <end position="73"/>
    </location>
</feature>
<feature type="helix" evidence="14">
    <location>
        <begin position="79"/>
        <end position="91"/>
    </location>
</feature>
<feature type="turn" evidence="14">
    <location>
        <begin position="92"/>
        <end position="94"/>
    </location>
</feature>
<feature type="helix" evidence="14">
    <location>
        <begin position="98"/>
        <end position="100"/>
    </location>
</feature>
<feature type="strand" evidence="14">
    <location>
        <begin position="103"/>
        <end position="107"/>
    </location>
</feature>
<feature type="helix" evidence="14">
    <location>
        <begin position="113"/>
        <end position="125"/>
    </location>
</feature>
<feature type="strand" evidence="14">
    <location>
        <begin position="130"/>
        <end position="136"/>
    </location>
</feature>
<feature type="helix" evidence="14">
    <location>
        <begin position="137"/>
        <end position="144"/>
    </location>
</feature>
<feature type="strand" evidence="14">
    <location>
        <begin position="148"/>
        <end position="155"/>
    </location>
</feature>
<feature type="strand" evidence="14">
    <location>
        <begin position="160"/>
        <end position="166"/>
    </location>
</feature>
<feature type="helix" evidence="14">
    <location>
        <begin position="172"/>
        <end position="174"/>
    </location>
</feature>
<feature type="strand" evidence="14">
    <location>
        <begin position="176"/>
        <end position="179"/>
    </location>
</feature>
<feature type="helix" evidence="14">
    <location>
        <begin position="182"/>
        <end position="194"/>
    </location>
</feature>
<feature type="turn" evidence="14">
    <location>
        <begin position="195"/>
        <end position="197"/>
    </location>
</feature>
<feature type="helix" evidence="14">
    <location>
        <begin position="203"/>
        <end position="216"/>
    </location>
</feature>
<feature type="helix" evidence="14">
    <location>
        <begin position="223"/>
        <end position="232"/>
    </location>
</feature>
<feature type="helix" evidence="14">
    <location>
        <begin position="234"/>
        <end position="236"/>
    </location>
</feature>
<feature type="strand" evidence="14">
    <location>
        <begin position="239"/>
        <end position="242"/>
    </location>
</feature>
<feature type="strand" evidence="14">
    <location>
        <begin position="248"/>
        <end position="251"/>
    </location>
</feature>
<feature type="helix" evidence="14">
    <location>
        <begin position="254"/>
        <end position="260"/>
    </location>
</feature>
<feature type="turn" evidence="14">
    <location>
        <begin position="261"/>
        <end position="263"/>
    </location>
</feature>
<feature type="helix" evidence="14">
    <location>
        <begin position="265"/>
        <end position="268"/>
    </location>
</feature>
<feature type="helix" evidence="14">
    <location>
        <begin position="275"/>
        <end position="284"/>
    </location>
</feature>
<feature type="helix" evidence="14">
    <location>
        <begin position="288"/>
        <end position="295"/>
    </location>
</feature>
<feature type="strand" evidence="14">
    <location>
        <begin position="298"/>
        <end position="302"/>
    </location>
</feature>
<feature type="helix" evidence="14">
    <location>
        <begin position="303"/>
        <end position="305"/>
    </location>
</feature>
<feature type="helix" evidence="14">
    <location>
        <begin position="310"/>
        <end position="321"/>
    </location>
</feature>
<feature type="helix" evidence="14">
    <location>
        <begin position="336"/>
        <end position="338"/>
    </location>
</feature>
<feature type="helix" evidence="14">
    <location>
        <begin position="339"/>
        <end position="349"/>
    </location>
</feature>
<feature type="helix" evidence="14">
    <location>
        <begin position="351"/>
        <end position="353"/>
    </location>
</feature>
<feature type="turn" evidence="14">
    <location>
        <begin position="354"/>
        <end position="356"/>
    </location>
</feature>
<feature type="strand" evidence="14">
    <location>
        <begin position="357"/>
        <end position="359"/>
    </location>
</feature>
<feature type="helix" evidence="14">
    <location>
        <begin position="360"/>
        <end position="366"/>
    </location>
</feature>
<feature type="helix" evidence="14">
    <location>
        <begin position="370"/>
        <end position="374"/>
    </location>
</feature>